<evidence type="ECO:0000255" key="1">
    <source>
        <dbReference type="PROSITE-ProRule" id="PRU00497"/>
    </source>
</evidence>
<organism>
    <name type="scientific">Drosophila melanogaster</name>
    <name type="common">Fruit fly</name>
    <dbReference type="NCBI Taxonomy" id="7227"/>
    <lineage>
        <taxon>Eukaryota</taxon>
        <taxon>Metazoa</taxon>
        <taxon>Ecdysozoa</taxon>
        <taxon>Arthropoda</taxon>
        <taxon>Hexapoda</taxon>
        <taxon>Insecta</taxon>
        <taxon>Pterygota</taxon>
        <taxon>Neoptera</taxon>
        <taxon>Endopterygota</taxon>
        <taxon>Diptera</taxon>
        <taxon>Brachycera</taxon>
        <taxon>Muscomorpha</taxon>
        <taxon>Ephydroidea</taxon>
        <taxon>Drosophilidae</taxon>
        <taxon>Drosophila</taxon>
        <taxon>Sophophora</taxon>
    </lineage>
</organism>
<gene>
    <name type="primary">Lcp4</name>
    <name type="ORF">CG2044</name>
</gene>
<sequence length="112" mass="11980">MFKILLVCALVALVAANENPEVKELVNDVQADGFVSKLVLDNGSAASATGDVHGNIDGVFEWVSPEGEHVRVSYKADENGYQPQSDLLPTPPPIPEAILKAIAYIQAHPSKE</sequence>
<feature type="signal peptide">
    <location>
        <begin position="1"/>
        <end position="16"/>
    </location>
</feature>
<feature type="chain" id="PRO_0000006393" description="Larval cuticle protein 4">
    <location>
        <begin position="17"/>
        <end position="112"/>
    </location>
</feature>
<feature type="domain" description="Chitin-binding type R&amp;R" evidence="1">
    <location>
        <begin position="31"/>
        <end position="92"/>
    </location>
</feature>
<comment type="function">
    <text>Component of the larval cuticle.</text>
</comment>
<keyword id="KW-0193">Cuticle</keyword>
<keyword id="KW-0903">Direct protein sequencing</keyword>
<keyword id="KW-1185">Reference proteome</keyword>
<keyword id="KW-0732">Signal</keyword>
<accession>P07189</accession>
<accession>D0IQD9</accession>
<accession>Q9V4T2</accession>
<name>LCP4_DROME</name>
<proteinExistence type="evidence at protein level"/>
<dbReference type="EMBL" id="V00203">
    <property type="protein sequence ID" value="CAA23490.1"/>
    <property type="molecule type" value="Genomic_DNA"/>
</dbReference>
<dbReference type="EMBL" id="AE013599">
    <property type="protein sequence ID" value="AAF59093.1"/>
    <property type="molecule type" value="Genomic_DNA"/>
</dbReference>
<dbReference type="EMBL" id="BT100177">
    <property type="protein sequence ID" value="ACY30634.1"/>
    <property type="molecule type" value="mRNA"/>
</dbReference>
<dbReference type="PIR" id="D25299">
    <property type="entry name" value="D25299"/>
</dbReference>
<dbReference type="RefSeq" id="NP_001260804.1">
    <property type="nucleotide sequence ID" value="NM_001273875.1"/>
</dbReference>
<dbReference type="RefSeq" id="NP_476622.1">
    <property type="nucleotide sequence ID" value="NM_057274.4"/>
</dbReference>
<dbReference type="BioGRID" id="61673">
    <property type="interactions" value="3"/>
</dbReference>
<dbReference type="FunCoup" id="P07189">
    <property type="interactions" value="18"/>
</dbReference>
<dbReference type="IntAct" id="P07189">
    <property type="interactions" value="2"/>
</dbReference>
<dbReference type="STRING" id="7227.FBpp0087823"/>
<dbReference type="PaxDb" id="7227-FBpp0087823"/>
<dbReference type="DNASU" id="35820"/>
<dbReference type="EnsemblMetazoa" id="FBtr0088744">
    <property type="protein sequence ID" value="FBpp0087823"/>
    <property type="gene ID" value="FBgn0002535"/>
</dbReference>
<dbReference type="EnsemblMetazoa" id="FBtr0333555">
    <property type="protein sequence ID" value="FBpp0305733"/>
    <property type="gene ID" value="FBgn0002535"/>
</dbReference>
<dbReference type="GeneID" id="35820"/>
<dbReference type="KEGG" id="dme:Dmel_CG2044"/>
<dbReference type="AGR" id="FB:FBgn0002535"/>
<dbReference type="CTD" id="35820"/>
<dbReference type="FlyBase" id="FBgn0002535">
    <property type="gene designation" value="Lcp4"/>
</dbReference>
<dbReference type="VEuPathDB" id="VectorBase:FBgn0002535"/>
<dbReference type="eggNOG" id="ENOG502TD3C">
    <property type="taxonomic scope" value="Eukaryota"/>
</dbReference>
<dbReference type="GeneTree" id="ENSGT00900000141325"/>
<dbReference type="HOGENOM" id="CLU_065450_3_1_1"/>
<dbReference type="InParanoid" id="P07189"/>
<dbReference type="OMA" id="ETHGGHE"/>
<dbReference type="OrthoDB" id="6343684at2759"/>
<dbReference type="PhylomeDB" id="P07189"/>
<dbReference type="BioGRID-ORCS" id="35820">
    <property type="hits" value="0 hits in 1 CRISPR screen"/>
</dbReference>
<dbReference type="ChiTaRS" id="Lcp4">
    <property type="organism name" value="fly"/>
</dbReference>
<dbReference type="GenomeRNAi" id="35820"/>
<dbReference type="PRO" id="PR:P07189"/>
<dbReference type="Proteomes" id="UP000000803">
    <property type="component" value="Chromosome 2R"/>
</dbReference>
<dbReference type="Bgee" id="FBgn0002535">
    <property type="expression patterns" value="Expressed in larva and 12 other cell types or tissues"/>
</dbReference>
<dbReference type="ExpressionAtlas" id="P07189">
    <property type="expression patterns" value="baseline and differential"/>
</dbReference>
<dbReference type="GO" id="GO:0062129">
    <property type="term" value="C:chitin-based extracellular matrix"/>
    <property type="evidence" value="ECO:0000314"/>
    <property type="project" value="FlyBase"/>
</dbReference>
<dbReference type="GO" id="GO:0008010">
    <property type="term" value="F:structural constituent of chitin-based larval cuticle"/>
    <property type="evidence" value="ECO:0000314"/>
    <property type="project" value="FlyBase"/>
</dbReference>
<dbReference type="GO" id="GO:0040003">
    <property type="term" value="P:chitin-based cuticle development"/>
    <property type="evidence" value="ECO:0000255"/>
    <property type="project" value="FlyBase"/>
</dbReference>
<dbReference type="InterPro" id="IPR031311">
    <property type="entry name" value="CHIT_BIND_RR_consensus"/>
</dbReference>
<dbReference type="InterPro" id="IPR050468">
    <property type="entry name" value="Cuticle_Struct_Prot"/>
</dbReference>
<dbReference type="InterPro" id="IPR000618">
    <property type="entry name" value="Insect_cuticle"/>
</dbReference>
<dbReference type="PANTHER" id="PTHR10380">
    <property type="entry name" value="CUTICLE PROTEIN"/>
    <property type="match status" value="1"/>
</dbReference>
<dbReference type="PANTHER" id="PTHR10380:SF237">
    <property type="entry name" value="CUTICULAR PROTEIN 65AU, ISOFORM A-RELATED"/>
    <property type="match status" value="1"/>
</dbReference>
<dbReference type="Pfam" id="PF00379">
    <property type="entry name" value="Chitin_bind_4"/>
    <property type="match status" value="1"/>
</dbReference>
<dbReference type="PROSITE" id="PS00233">
    <property type="entry name" value="CHIT_BIND_RR_1"/>
    <property type="match status" value="1"/>
</dbReference>
<dbReference type="PROSITE" id="PS51155">
    <property type="entry name" value="CHIT_BIND_RR_2"/>
    <property type="match status" value="1"/>
</dbReference>
<protein>
    <recommendedName>
        <fullName>Larval cuticle protein 4</fullName>
    </recommendedName>
    <alternativeName>
        <fullName>Larval cuticle protein IV</fullName>
    </alternativeName>
</protein>
<reference key="1">
    <citation type="journal article" date="1982" name="Cell">
        <title>Cuticle protein genes of Drosophila: structure, organization and evolution of four clustered genes.</title>
        <authorList>
            <person name="Snyder M."/>
            <person name="Hunkapiller M."/>
            <person name="Yuen D."/>
            <person name="Silvert D."/>
            <person name="Fristrom J."/>
            <person name="Davidson N."/>
        </authorList>
    </citation>
    <scope>NUCLEOTIDE SEQUENCE [GENOMIC DNA]</scope>
    <scope>PARTIAL PROTEIN SEQUENCE</scope>
    <source>
        <strain>Canton-S</strain>
        <strain>Oregon-R</strain>
        <tissue>Larva</tissue>
    </source>
</reference>
<reference key="2">
    <citation type="journal article" date="2000" name="Science">
        <title>The genome sequence of Drosophila melanogaster.</title>
        <authorList>
            <person name="Adams M.D."/>
            <person name="Celniker S.E."/>
            <person name="Holt R.A."/>
            <person name="Evans C.A."/>
            <person name="Gocayne J.D."/>
            <person name="Amanatides P.G."/>
            <person name="Scherer S.E."/>
            <person name="Li P.W."/>
            <person name="Hoskins R.A."/>
            <person name="Galle R.F."/>
            <person name="George R.A."/>
            <person name="Lewis S.E."/>
            <person name="Richards S."/>
            <person name="Ashburner M."/>
            <person name="Henderson S.N."/>
            <person name="Sutton G.G."/>
            <person name="Wortman J.R."/>
            <person name="Yandell M.D."/>
            <person name="Zhang Q."/>
            <person name="Chen L.X."/>
            <person name="Brandon R.C."/>
            <person name="Rogers Y.-H.C."/>
            <person name="Blazej R.G."/>
            <person name="Champe M."/>
            <person name="Pfeiffer B.D."/>
            <person name="Wan K.H."/>
            <person name="Doyle C."/>
            <person name="Baxter E.G."/>
            <person name="Helt G."/>
            <person name="Nelson C.R."/>
            <person name="Miklos G.L.G."/>
            <person name="Abril J.F."/>
            <person name="Agbayani A."/>
            <person name="An H.-J."/>
            <person name="Andrews-Pfannkoch C."/>
            <person name="Baldwin D."/>
            <person name="Ballew R.M."/>
            <person name="Basu A."/>
            <person name="Baxendale J."/>
            <person name="Bayraktaroglu L."/>
            <person name="Beasley E.M."/>
            <person name="Beeson K.Y."/>
            <person name="Benos P.V."/>
            <person name="Berman B.P."/>
            <person name="Bhandari D."/>
            <person name="Bolshakov S."/>
            <person name="Borkova D."/>
            <person name="Botchan M.R."/>
            <person name="Bouck J."/>
            <person name="Brokstein P."/>
            <person name="Brottier P."/>
            <person name="Burtis K.C."/>
            <person name="Busam D.A."/>
            <person name="Butler H."/>
            <person name="Cadieu E."/>
            <person name="Center A."/>
            <person name="Chandra I."/>
            <person name="Cherry J.M."/>
            <person name="Cawley S."/>
            <person name="Dahlke C."/>
            <person name="Davenport L.B."/>
            <person name="Davies P."/>
            <person name="de Pablos B."/>
            <person name="Delcher A."/>
            <person name="Deng Z."/>
            <person name="Mays A.D."/>
            <person name="Dew I."/>
            <person name="Dietz S.M."/>
            <person name="Dodson K."/>
            <person name="Doup L.E."/>
            <person name="Downes M."/>
            <person name="Dugan-Rocha S."/>
            <person name="Dunkov B.C."/>
            <person name="Dunn P."/>
            <person name="Durbin K.J."/>
            <person name="Evangelista C.C."/>
            <person name="Ferraz C."/>
            <person name="Ferriera S."/>
            <person name="Fleischmann W."/>
            <person name="Fosler C."/>
            <person name="Gabrielian A.E."/>
            <person name="Garg N.S."/>
            <person name="Gelbart W.M."/>
            <person name="Glasser K."/>
            <person name="Glodek A."/>
            <person name="Gong F."/>
            <person name="Gorrell J.H."/>
            <person name="Gu Z."/>
            <person name="Guan P."/>
            <person name="Harris M."/>
            <person name="Harris N.L."/>
            <person name="Harvey D.A."/>
            <person name="Heiman T.J."/>
            <person name="Hernandez J.R."/>
            <person name="Houck J."/>
            <person name="Hostin D."/>
            <person name="Houston K.A."/>
            <person name="Howland T.J."/>
            <person name="Wei M.-H."/>
            <person name="Ibegwam C."/>
            <person name="Jalali M."/>
            <person name="Kalush F."/>
            <person name="Karpen G.H."/>
            <person name="Ke Z."/>
            <person name="Kennison J.A."/>
            <person name="Ketchum K.A."/>
            <person name="Kimmel B.E."/>
            <person name="Kodira C.D."/>
            <person name="Kraft C.L."/>
            <person name="Kravitz S."/>
            <person name="Kulp D."/>
            <person name="Lai Z."/>
            <person name="Lasko P."/>
            <person name="Lei Y."/>
            <person name="Levitsky A.A."/>
            <person name="Li J.H."/>
            <person name="Li Z."/>
            <person name="Liang Y."/>
            <person name="Lin X."/>
            <person name="Liu X."/>
            <person name="Mattei B."/>
            <person name="McIntosh T.C."/>
            <person name="McLeod M.P."/>
            <person name="McPherson D."/>
            <person name="Merkulov G."/>
            <person name="Milshina N.V."/>
            <person name="Mobarry C."/>
            <person name="Morris J."/>
            <person name="Moshrefi A."/>
            <person name="Mount S.M."/>
            <person name="Moy M."/>
            <person name="Murphy B."/>
            <person name="Murphy L."/>
            <person name="Muzny D.M."/>
            <person name="Nelson D.L."/>
            <person name="Nelson D.R."/>
            <person name="Nelson K.A."/>
            <person name="Nixon K."/>
            <person name="Nusskern D.R."/>
            <person name="Pacleb J.M."/>
            <person name="Palazzolo M."/>
            <person name="Pittman G.S."/>
            <person name="Pan S."/>
            <person name="Pollard J."/>
            <person name="Puri V."/>
            <person name="Reese M.G."/>
            <person name="Reinert K."/>
            <person name="Remington K."/>
            <person name="Saunders R.D.C."/>
            <person name="Scheeler F."/>
            <person name="Shen H."/>
            <person name="Shue B.C."/>
            <person name="Siden-Kiamos I."/>
            <person name="Simpson M."/>
            <person name="Skupski M.P."/>
            <person name="Smith T.J."/>
            <person name="Spier E."/>
            <person name="Spradling A.C."/>
            <person name="Stapleton M."/>
            <person name="Strong R."/>
            <person name="Sun E."/>
            <person name="Svirskas R."/>
            <person name="Tector C."/>
            <person name="Turner R."/>
            <person name="Venter E."/>
            <person name="Wang A.H."/>
            <person name="Wang X."/>
            <person name="Wang Z.-Y."/>
            <person name="Wassarman D.A."/>
            <person name="Weinstock G.M."/>
            <person name="Weissenbach J."/>
            <person name="Williams S.M."/>
            <person name="Woodage T."/>
            <person name="Worley K.C."/>
            <person name="Wu D."/>
            <person name="Yang S."/>
            <person name="Yao Q.A."/>
            <person name="Ye J."/>
            <person name="Yeh R.-F."/>
            <person name="Zaveri J.S."/>
            <person name="Zhan M."/>
            <person name="Zhang G."/>
            <person name="Zhao Q."/>
            <person name="Zheng L."/>
            <person name="Zheng X.H."/>
            <person name="Zhong F.N."/>
            <person name="Zhong W."/>
            <person name="Zhou X."/>
            <person name="Zhu S.C."/>
            <person name="Zhu X."/>
            <person name="Smith H.O."/>
            <person name="Gibbs R.A."/>
            <person name="Myers E.W."/>
            <person name="Rubin G.M."/>
            <person name="Venter J.C."/>
        </authorList>
    </citation>
    <scope>NUCLEOTIDE SEQUENCE [LARGE SCALE GENOMIC DNA]</scope>
    <source>
        <strain>Berkeley</strain>
    </source>
</reference>
<reference key="3">
    <citation type="journal article" date="2002" name="Genome Biol.">
        <title>Annotation of the Drosophila melanogaster euchromatic genome: a systematic review.</title>
        <authorList>
            <person name="Misra S."/>
            <person name="Crosby M.A."/>
            <person name="Mungall C.J."/>
            <person name="Matthews B.B."/>
            <person name="Campbell K.S."/>
            <person name="Hradecky P."/>
            <person name="Huang Y."/>
            <person name="Kaminker J.S."/>
            <person name="Millburn G.H."/>
            <person name="Prochnik S.E."/>
            <person name="Smith C.D."/>
            <person name="Tupy J.L."/>
            <person name="Whitfield E.J."/>
            <person name="Bayraktaroglu L."/>
            <person name="Berman B.P."/>
            <person name="Bettencourt B.R."/>
            <person name="Celniker S.E."/>
            <person name="de Grey A.D.N.J."/>
            <person name="Drysdale R.A."/>
            <person name="Harris N.L."/>
            <person name="Richter J."/>
            <person name="Russo S."/>
            <person name="Schroeder A.J."/>
            <person name="Shu S.Q."/>
            <person name="Stapleton M."/>
            <person name="Yamada C."/>
            <person name="Ashburner M."/>
            <person name="Gelbart W.M."/>
            <person name="Rubin G.M."/>
            <person name="Lewis S.E."/>
        </authorList>
    </citation>
    <scope>GENOME REANNOTATION</scope>
    <source>
        <strain>Berkeley</strain>
    </source>
</reference>
<reference key="4">
    <citation type="submission" date="2009-10" db="EMBL/GenBank/DDBJ databases">
        <authorList>
            <person name="Carlson J.W."/>
            <person name="Booth B."/>
            <person name="Frise E."/>
            <person name="Sandler J."/>
            <person name="Wan K.H."/>
            <person name="Yu C."/>
            <person name="Celniker S.E."/>
        </authorList>
    </citation>
    <scope>NUCLEOTIDE SEQUENCE [LARGE SCALE MRNA]</scope>
    <source>
        <strain>Berkeley</strain>
    </source>
</reference>